<evidence type="ECO:0000250" key="1"/>
<evidence type="ECO:0000250" key="2">
    <source>
        <dbReference type="UniProtKB" id="Q15475"/>
    </source>
</evidence>
<evidence type="ECO:0000250" key="3">
    <source>
        <dbReference type="UniProtKB" id="Q62231"/>
    </source>
</evidence>
<evidence type="ECO:0000255" key="4">
    <source>
        <dbReference type="PROSITE-ProRule" id="PRU00108"/>
    </source>
</evidence>
<evidence type="ECO:0000256" key="5">
    <source>
        <dbReference type="SAM" id="MobiDB-lite"/>
    </source>
</evidence>
<evidence type="ECO:0000305" key="6"/>
<name>SIX1_LAGLA</name>
<organism>
    <name type="scientific">Lagothrix lagotricha</name>
    <name type="common">Brown woolly monkey</name>
    <name type="synonym">Humboldt's woolly monkey</name>
    <dbReference type="NCBI Taxonomy" id="9519"/>
    <lineage>
        <taxon>Eukaryota</taxon>
        <taxon>Metazoa</taxon>
        <taxon>Chordata</taxon>
        <taxon>Craniata</taxon>
        <taxon>Vertebrata</taxon>
        <taxon>Euteleostomi</taxon>
        <taxon>Mammalia</taxon>
        <taxon>Eutheria</taxon>
        <taxon>Euarchontoglires</taxon>
        <taxon>Primates</taxon>
        <taxon>Haplorrhini</taxon>
        <taxon>Platyrrhini</taxon>
        <taxon>Atelidae</taxon>
        <taxon>Atelinae</taxon>
        <taxon>Lagothrix</taxon>
    </lineage>
</organism>
<proteinExistence type="inferred from homology"/>
<reference key="1">
    <citation type="submission" date="2006-08" db="EMBL/GenBank/DDBJ databases">
        <title>Positive selection in transcription factor genes on the human lineage.</title>
        <authorList>
            <person name="Nickel G.C."/>
            <person name="Tefft D.L."/>
            <person name="Trevarthen K."/>
            <person name="Funt J."/>
            <person name="Adams M.D."/>
        </authorList>
    </citation>
    <scope>NUCLEOTIDE SEQUENCE [GENOMIC DNA]</scope>
</reference>
<protein>
    <recommendedName>
        <fullName>Homeobox protein SIX1</fullName>
    </recommendedName>
    <alternativeName>
        <fullName>Sine oculis homeobox homolog 1</fullName>
    </alternativeName>
</protein>
<sequence length="284" mass="32180">MSMLPSFGFTQEQVACVCEVLQQGGNLERLGRFLWSLPACDHLHKNESVLKAKAVVAFHRGNFRELYKILESHQFSPHNHPKLQQLWLKAHYVEAEKLRGRPLGAVGKYRVRRKFPLPRTIWDGEETSYCFKEKSRGVLREWYAHNPYPSPREKRELAEATGLTTTQVSNWFKNRRQRDRAAEAKERENTENNNSSSNKQNQLSPLEGGKPLMSSSEEEFSPPQSPDQNSVLLLQGNMGHARSSNYSLPGLTASQPSHGLQAHQHQLQDSLLGPLTSSLVDLGS</sequence>
<gene>
    <name type="primary">SIX1</name>
</gene>
<comment type="function">
    <text evidence="2 3">Transcription factor that is involved in the regulation of cell proliferation, apoptosis and embryonic development (By similarity). Plays an important role in the development of several organs, including kidney, muscle and inner ear (By similarity). Depending on context, functions as a transcriptional repressor or activator (By similarity). Lacks an activation domain, and requires interaction with EYA family members for transcription activation (By similarity). Mediates nuclear translocation of EYA1 and EYA2 (By similarity). Binds the 5'-TCA[AG][AG]TTNC-3' motif present in the MEF3 element in the MYOG promoter and CIDEA enhancer (By similarity). Regulates the expression of numerous genes, including MYC, CCNA1, CCND1 and EZR (By similarity). Acts as an activator of the IGFBP5 promoter, probably coactivated by EYA2 (By similarity). Repression of precursor cell proliferation in myoblasts is switched to activation through recruitment of EYA3 to the SIX1-DACH1 complex (By similarity). During myogenesis, seems to act together with EYA2 and DACH2 (By similarity). Regulates the expression of CCNA1 (By similarity). Promotes brown adipocyte differentiation (By similarity).</text>
</comment>
<comment type="subunit">
    <text evidence="2 3">Interacts with DACH1 (By similarity). Interacts with EYA1 (By similarity). Interacts with EYA2 (By similarity). Interacts with CDH1 (By similarity). Interacts with TBX18 (By similarity). Interacts with CEBPA (By similarity). Interacts with CEBPB (By similarity). Interacts with EBF2 (By similarity).</text>
</comment>
<comment type="subcellular location">
    <subcellularLocation>
        <location evidence="2">Nucleus</location>
    </subcellularLocation>
    <subcellularLocation>
        <location evidence="2">Cytoplasm</location>
    </subcellularLocation>
</comment>
<comment type="PTM">
    <text evidence="1">Phosphorylated during interphase; becomes hyperphosphorylated during mitosis. Hyperphosphorylation impairs binding to promoter elements (By similarity).</text>
</comment>
<comment type="PTM">
    <text evidence="1">Ubiquitinated by the anaphase promoting complex (APC), leading to its proteasomal degradation.</text>
</comment>
<comment type="similarity">
    <text evidence="6">Belongs to the SIX/Sine oculis homeobox family.</text>
</comment>
<feature type="chain" id="PRO_0000285459" description="Homeobox protein SIX1">
    <location>
        <begin position="1"/>
        <end position="284"/>
    </location>
</feature>
<feature type="DNA-binding region" description="Homeobox" evidence="4">
    <location>
        <begin position="124"/>
        <end position="183"/>
    </location>
</feature>
<feature type="region of interest" description="Disordered" evidence="5">
    <location>
        <begin position="168"/>
        <end position="271"/>
    </location>
</feature>
<feature type="compositionally biased region" description="Basic and acidic residues" evidence="5">
    <location>
        <begin position="179"/>
        <end position="190"/>
    </location>
</feature>
<feature type="compositionally biased region" description="Polar residues" evidence="5">
    <location>
        <begin position="242"/>
        <end position="271"/>
    </location>
</feature>
<dbReference type="EMBL" id="DQ976721">
    <property type="protein sequence ID" value="ABM68164.1"/>
    <property type="molecule type" value="Genomic_DNA"/>
</dbReference>
<dbReference type="SMR" id="A2D5H2"/>
<dbReference type="GO" id="GO:0005737">
    <property type="term" value="C:cytoplasm"/>
    <property type="evidence" value="ECO:0007669"/>
    <property type="project" value="UniProtKB-SubCell"/>
</dbReference>
<dbReference type="GO" id="GO:0005634">
    <property type="term" value="C:nucleus"/>
    <property type="evidence" value="ECO:0000250"/>
    <property type="project" value="UniProtKB"/>
</dbReference>
<dbReference type="GO" id="GO:0005667">
    <property type="term" value="C:transcription regulator complex"/>
    <property type="evidence" value="ECO:0000250"/>
    <property type="project" value="UniProtKB"/>
</dbReference>
<dbReference type="GO" id="GO:0003700">
    <property type="term" value="F:DNA-binding transcription factor activity"/>
    <property type="evidence" value="ECO:0000250"/>
    <property type="project" value="UniProtKB"/>
</dbReference>
<dbReference type="GO" id="GO:0000981">
    <property type="term" value="F:DNA-binding transcription factor activity, RNA polymerase II-specific"/>
    <property type="evidence" value="ECO:0007669"/>
    <property type="project" value="InterPro"/>
</dbReference>
<dbReference type="GO" id="GO:0000978">
    <property type="term" value="F:RNA polymerase II cis-regulatory region sequence-specific DNA binding"/>
    <property type="evidence" value="ECO:0007669"/>
    <property type="project" value="TreeGrafter"/>
</dbReference>
<dbReference type="GO" id="GO:0043565">
    <property type="term" value="F:sequence-specific DNA binding"/>
    <property type="evidence" value="ECO:0000250"/>
    <property type="project" value="UniProtKB"/>
</dbReference>
<dbReference type="GO" id="GO:0006915">
    <property type="term" value="P:apoptotic process"/>
    <property type="evidence" value="ECO:0007669"/>
    <property type="project" value="UniProtKB-KW"/>
</dbReference>
<dbReference type="GO" id="GO:0001658">
    <property type="term" value="P:branching involved in ureteric bud morphogenesis"/>
    <property type="evidence" value="ECO:0000250"/>
    <property type="project" value="UniProtKB"/>
</dbReference>
<dbReference type="GO" id="GO:0048701">
    <property type="term" value="P:embryonic cranial skeleton morphogenesis"/>
    <property type="evidence" value="ECO:0000250"/>
    <property type="project" value="UniProtKB"/>
</dbReference>
<dbReference type="GO" id="GO:0048704">
    <property type="term" value="P:embryonic skeletal system morphogenesis"/>
    <property type="evidence" value="ECO:0000250"/>
    <property type="project" value="UniProtKB"/>
</dbReference>
<dbReference type="GO" id="GO:0030855">
    <property type="term" value="P:epithelial cell differentiation"/>
    <property type="evidence" value="ECO:0000250"/>
    <property type="project" value="UniProtKB"/>
</dbReference>
<dbReference type="GO" id="GO:0048699">
    <property type="term" value="P:generation of neurons"/>
    <property type="evidence" value="ECO:0000250"/>
    <property type="project" value="UniProtKB"/>
</dbReference>
<dbReference type="GO" id="GO:0048839">
    <property type="term" value="P:inner ear development"/>
    <property type="evidence" value="ECO:0000250"/>
    <property type="project" value="UniProtKB"/>
</dbReference>
<dbReference type="GO" id="GO:0042472">
    <property type="term" value="P:inner ear morphogenesis"/>
    <property type="evidence" value="ECO:0000250"/>
    <property type="project" value="UniProtKB"/>
</dbReference>
<dbReference type="GO" id="GO:0001822">
    <property type="term" value="P:kidney development"/>
    <property type="evidence" value="ECO:0000250"/>
    <property type="project" value="UniProtKB"/>
</dbReference>
<dbReference type="GO" id="GO:0072172">
    <property type="term" value="P:mesonephric tubule formation"/>
    <property type="evidence" value="ECO:0000250"/>
    <property type="project" value="UniProtKB"/>
</dbReference>
<dbReference type="GO" id="GO:0072075">
    <property type="term" value="P:metanephric mesenchyme development"/>
    <property type="evidence" value="ECO:0000250"/>
    <property type="project" value="UniProtKB"/>
</dbReference>
<dbReference type="GO" id="GO:0051451">
    <property type="term" value="P:myoblast migration"/>
    <property type="evidence" value="ECO:0000250"/>
    <property type="project" value="UniProtKB"/>
</dbReference>
<dbReference type="GO" id="GO:0043524">
    <property type="term" value="P:negative regulation of neuron apoptotic process"/>
    <property type="evidence" value="ECO:0000250"/>
    <property type="project" value="UniProtKB"/>
</dbReference>
<dbReference type="GO" id="GO:0001759">
    <property type="term" value="P:organ induction"/>
    <property type="evidence" value="ECO:0000250"/>
    <property type="project" value="UniProtKB"/>
</dbReference>
<dbReference type="GO" id="GO:0007389">
    <property type="term" value="P:pattern specification process"/>
    <property type="evidence" value="ECO:0000250"/>
    <property type="project" value="UniProtKB"/>
</dbReference>
<dbReference type="GO" id="GO:0090190">
    <property type="term" value="P:positive regulation of branching involved in ureteric bud morphogenesis"/>
    <property type="evidence" value="ECO:0000250"/>
    <property type="project" value="UniProtKB"/>
</dbReference>
<dbReference type="GO" id="GO:0090336">
    <property type="term" value="P:positive regulation of brown fat cell differentiation"/>
    <property type="evidence" value="ECO:0000250"/>
    <property type="project" value="UniProtKB"/>
</dbReference>
<dbReference type="GO" id="GO:0045893">
    <property type="term" value="P:positive regulation of DNA-templated transcription"/>
    <property type="evidence" value="ECO:0000250"/>
    <property type="project" value="UniProtKB"/>
</dbReference>
<dbReference type="GO" id="GO:0045944">
    <property type="term" value="P:positive regulation of transcription by RNA polymerase II"/>
    <property type="evidence" value="ECO:0000250"/>
    <property type="project" value="UniProtKB"/>
</dbReference>
<dbReference type="GO" id="GO:0072107">
    <property type="term" value="P:positive regulation of ureteric bud formation"/>
    <property type="evidence" value="ECO:0000250"/>
    <property type="project" value="UniProtKB"/>
</dbReference>
<dbReference type="GO" id="GO:0072095">
    <property type="term" value="P:regulation of branch elongation involved in ureteric bud branching"/>
    <property type="evidence" value="ECO:0000250"/>
    <property type="project" value="UniProtKB"/>
</dbReference>
<dbReference type="GO" id="GO:0006355">
    <property type="term" value="P:regulation of DNA-templated transcription"/>
    <property type="evidence" value="ECO:0000250"/>
    <property type="project" value="UniProtKB"/>
</dbReference>
<dbReference type="GO" id="GO:0045664">
    <property type="term" value="P:regulation of neuron differentiation"/>
    <property type="evidence" value="ECO:0000250"/>
    <property type="project" value="UniProtKB"/>
</dbReference>
<dbReference type="GO" id="GO:0014857">
    <property type="term" value="P:regulation of skeletal muscle cell proliferation"/>
    <property type="evidence" value="ECO:0007669"/>
    <property type="project" value="TreeGrafter"/>
</dbReference>
<dbReference type="GO" id="GO:0048741">
    <property type="term" value="P:skeletal muscle fiber development"/>
    <property type="evidence" value="ECO:0007669"/>
    <property type="project" value="TreeGrafter"/>
</dbReference>
<dbReference type="GO" id="GO:0007519">
    <property type="term" value="P:skeletal muscle tissue development"/>
    <property type="evidence" value="ECO:0000250"/>
    <property type="project" value="UniProtKB"/>
</dbReference>
<dbReference type="GO" id="GO:0048538">
    <property type="term" value="P:thymus development"/>
    <property type="evidence" value="ECO:0000250"/>
    <property type="project" value="UniProtKB"/>
</dbReference>
<dbReference type="GO" id="GO:0030878">
    <property type="term" value="P:thyroid gland development"/>
    <property type="evidence" value="ECO:0000250"/>
    <property type="project" value="UniProtKB"/>
</dbReference>
<dbReference type="GO" id="GO:0001657">
    <property type="term" value="P:ureteric bud development"/>
    <property type="evidence" value="ECO:0000250"/>
    <property type="project" value="UniProtKB"/>
</dbReference>
<dbReference type="CDD" id="cd00086">
    <property type="entry name" value="homeodomain"/>
    <property type="match status" value="1"/>
</dbReference>
<dbReference type="FunFam" id="1.10.10.60:FF:000063">
    <property type="entry name" value="SIX homeobox 2"/>
    <property type="match status" value="1"/>
</dbReference>
<dbReference type="Gene3D" id="1.10.10.60">
    <property type="entry name" value="Homeodomain-like"/>
    <property type="match status" value="1"/>
</dbReference>
<dbReference type="InterPro" id="IPR001356">
    <property type="entry name" value="HD"/>
</dbReference>
<dbReference type="InterPro" id="IPR017970">
    <property type="entry name" value="Homeobox_CS"/>
</dbReference>
<dbReference type="InterPro" id="IPR009057">
    <property type="entry name" value="Homeodomain-like_sf"/>
</dbReference>
<dbReference type="InterPro" id="IPR008422">
    <property type="entry name" value="KN_HD"/>
</dbReference>
<dbReference type="InterPro" id="IPR031701">
    <property type="entry name" value="SIX1_SD"/>
</dbReference>
<dbReference type="PANTHER" id="PTHR10390">
    <property type="entry name" value="HOMEOBOX PROTEIN SIX"/>
    <property type="match status" value="1"/>
</dbReference>
<dbReference type="PANTHER" id="PTHR10390:SF13">
    <property type="entry name" value="HOMEOBOX PROTEIN SIX1"/>
    <property type="match status" value="1"/>
</dbReference>
<dbReference type="Pfam" id="PF05920">
    <property type="entry name" value="Homeobox_KN"/>
    <property type="match status" value="1"/>
</dbReference>
<dbReference type="Pfam" id="PF16878">
    <property type="entry name" value="SIX1_SD"/>
    <property type="match status" value="1"/>
</dbReference>
<dbReference type="SMART" id="SM00389">
    <property type="entry name" value="HOX"/>
    <property type="match status" value="1"/>
</dbReference>
<dbReference type="SUPFAM" id="SSF46689">
    <property type="entry name" value="Homeodomain-like"/>
    <property type="match status" value="1"/>
</dbReference>
<dbReference type="PROSITE" id="PS00027">
    <property type="entry name" value="HOMEOBOX_1"/>
    <property type="match status" value="1"/>
</dbReference>
<dbReference type="PROSITE" id="PS50071">
    <property type="entry name" value="HOMEOBOX_2"/>
    <property type="match status" value="1"/>
</dbReference>
<keyword id="KW-0010">Activator</keyword>
<keyword id="KW-0053">Apoptosis</keyword>
<keyword id="KW-0963">Cytoplasm</keyword>
<keyword id="KW-0217">Developmental protein</keyword>
<keyword id="KW-0238">DNA-binding</keyword>
<keyword id="KW-0371">Homeobox</keyword>
<keyword id="KW-0539">Nucleus</keyword>
<keyword id="KW-0597">Phosphoprotein</keyword>
<keyword id="KW-0678">Repressor</keyword>
<keyword id="KW-0804">Transcription</keyword>
<keyword id="KW-0805">Transcription regulation</keyword>
<keyword id="KW-0832">Ubl conjugation</keyword>
<accession>A2D5H2</accession>